<evidence type="ECO:0000250" key="1">
    <source>
        <dbReference type="UniProtKB" id="Q9D8F1"/>
    </source>
</evidence>
<evidence type="ECO:0000255" key="2">
    <source>
        <dbReference type="PROSITE-ProRule" id="PRU00805"/>
    </source>
</evidence>
<evidence type="ECO:0000269" key="3">
    <source>
    </source>
</evidence>
<evidence type="ECO:0000269" key="4">
    <source>
    </source>
</evidence>
<evidence type="ECO:0000269" key="5">
    <source>
    </source>
</evidence>
<evidence type="ECO:0000269" key="6">
    <source>
    </source>
</evidence>
<evidence type="ECO:0000269" key="7">
    <source>
    </source>
</evidence>
<evidence type="ECO:0000303" key="8">
    <source>
    </source>
</evidence>
<evidence type="ECO:0000303" key="9">
    <source>
    </source>
</evidence>
<evidence type="ECO:0000303" key="10">
    <source>
    </source>
</evidence>
<evidence type="ECO:0000305" key="11"/>
<evidence type="ECO:0000305" key="12">
    <source>
    </source>
</evidence>
<evidence type="ECO:0000312" key="13">
    <source>
        <dbReference type="HGNC" id="HGNC:21900"/>
    </source>
</evidence>
<evidence type="ECO:0007744" key="14">
    <source>
    </source>
</evidence>
<evidence type="ECO:0007744" key="15">
    <source>
    </source>
</evidence>
<evidence type="ECO:0007744" key="16">
    <source>
    </source>
</evidence>
<name>ALKB4_HUMAN</name>
<reference key="1">
    <citation type="journal article" date="2004" name="Nat. Genet.">
        <title>Complete sequencing and characterization of 21,243 full-length human cDNAs.</title>
        <authorList>
            <person name="Ota T."/>
            <person name="Suzuki Y."/>
            <person name="Nishikawa T."/>
            <person name="Otsuki T."/>
            <person name="Sugiyama T."/>
            <person name="Irie R."/>
            <person name="Wakamatsu A."/>
            <person name="Hayashi K."/>
            <person name="Sato H."/>
            <person name="Nagai K."/>
            <person name="Kimura K."/>
            <person name="Makita H."/>
            <person name="Sekine M."/>
            <person name="Obayashi M."/>
            <person name="Nishi T."/>
            <person name="Shibahara T."/>
            <person name="Tanaka T."/>
            <person name="Ishii S."/>
            <person name="Yamamoto J."/>
            <person name="Saito K."/>
            <person name="Kawai Y."/>
            <person name="Isono Y."/>
            <person name="Nakamura Y."/>
            <person name="Nagahari K."/>
            <person name="Murakami K."/>
            <person name="Yasuda T."/>
            <person name="Iwayanagi T."/>
            <person name="Wagatsuma M."/>
            <person name="Shiratori A."/>
            <person name="Sudo H."/>
            <person name="Hosoiri T."/>
            <person name="Kaku Y."/>
            <person name="Kodaira H."/>
            <person name="Kondo H."/>
            <person name="Sugawara M."/>
            <person name="Takahashi M."/>
            <person name="Kanda K."/>
            <person name="Yokoi T."/>
            <person name="Furuya T."/>
            <person name="Kikkawa E."/>
            <person name="Omura Y."/>
            <person name="Abe K."/>
            <person name="Kamihara K."/>
            <person name="Katsuta N."/>
            <person name="Sato K."/>
            <person name="Tanikawa M."/>
            <person name="Yamazaki M."/>
            <person name="Ninomiya K."/>
            <person name="Ishibashi T."/>
            <person name="Yamashita H."/>
            <person name="Murakawa K."/>
            <person name="Fujimori K."/>
            <person name="Tanai H."/>
            <person name="Kimata M."/>
            <person name="Watanabe M."/>
            <person name="Hiraoka S."/>
            <person name="Chiba Y."/>
            <person name="Ishida S."/>
            <person name="Ono Y."/>
            <person name="Takiguchi S."/>
            <person name="Watanabe S."/>
            <person name="Yosida M."/>
            <person name="Hotuta T."/>
            <person name="Kusano J."/>
            <person name="Kanehori K."/>
            <person name="Takahashi-Fujii A."/>
            <person name="Hara H."/>
            <person name="Tanase T.-O."/>
            <person name="Nomura Y."/>
            <person name="Togiya S."/>
            <person name="Komai F."/>
            <person name="Hara R."/>
            <person name="Takeuchi K."/>
            <person name="Arita M."/>
            <person name="Imose N."/>
            <person name="Musashino K."/>
            <person name="Yuuki H."/>
            <person name="Oshima A."/>
            <person name="Sasaki N."/>
            <person name="Aotsuka S."/>
            <person name="Yoshikawa Y."/>
            <person name="Matsunawa H."/>
            <person name="Ichihara T."/>
            <person name="Shiohata N."/>
            <person name="Sano S."/>
            <person name="Moriya S."/>
            <person name="Momiyama H."/>
            <person name="Satoh N."/>
            <person name="Takami S."/>
            <person name="Terashima Y."/>
            <person name="Suzuki O."/>
            <person name="Nakagawa S."/>
            <person name="Senoh A."/>
            <person name="Mizoguchi H."/>
            <person name="Goto Y."/>
            <person name="Shimizu F."/>
            <person name="Wakebe H."/>
            <person name="Hishigaki H."/>
            <person name="Watanabe T."/>
            <person name="Sugiyama A."/>
            <person name="Takemoto M."/>
            <person name="Kawakami B."/>
            <person name="Yamazaki M."/>
            <person name="Watanabe K."/>
            <person name="Kumagai A."/>
            <person name="Itakura S."/>
            <person name="Fukuzumi Y."/>
            <person name="Fujimori Y."/>
            <person name="Komiyama M."/>
            <person name="Tashiro H."/>
            <person name="Tanigami A."/>
            <person name="Fujiwara T."/>
            <person name="Ono T."/>
            <person name="Yamada K."/>
            <person name="Fujii Y."/>
            <person name="Ozaki K."/>
            <person name="Hirao M."/>
            <person name="Ohmori Y."/>
            <person name="Kawabata A."/>
            <person name="Hikiji T."/>
            <person name="Kobatake N."/>
            <person name="Inagaki H."/>
            <person name="Ikema Y."/>
            <person name="Okamoto S."/>
            <person name="Okitani R."/>
            <person name="Kawakami T."/>
            <person name="Noguchi S."/>
            <person name="Itoh T."/>
            <person name="Shigeta K."/>
            <person name="Senba T."/>
            <person name="Matsumura K."/>
            <person name="Nakajima Y."/>
            <person name="Mizuno T."/>
            <person name="Morinaga M."/>
            <person name="Sasaki M."/>
            <person name="Togashi T."/>
            <person name="Oyama M."/>
            <person name="Hata H."/>
            <person name="Watanabe M."/>
            <person name="Komatsu T."/>
            <person name="Mizushima-Sugano J."/>
            <person name="Satoh T."/>
            <person name="Shirai Y."/>
            <person name="Takahashi Y."/>
            <person name="Nakagawa K."/>
            <person name="Okumura K."/>
            <person name="Nagase T."/>
            <person name="Nomura N."/>
            <person name="Kikuchi H."/>
            <person name="Masuho Y."/>
            <person name="Yamashita R."/>
            <person name="Nakai K."/>
            <person name="Yada T."/>
            <person name="Nakamura Y."/>
            <person name="Ohara O."/>
            <person name="Isogai T."/>
            <person name="Sugano S."/>
        </authorList>
    </citation>
    <scope>NUCLEOTIDE SEQUENCE [LARGE SCALE MRNA] (ISOFORMS 1 AND 2)</scope>
    <source>
        <tissue>Adipose tissue</tissue>
        <tissue>Epithelium</tissue>
    </source>
</reference>
<reference key="2">
    <citation type="submission" date="2005-04" db="EMBL/GenBank/DDBJ databases">
        <authorList>
            <person name="Suzuki Y."/>
            <person name="Sugano S."/>
            <person name="Totoki Y."/>
            <person name="Toyoda A."/>
            <person name="Takeda T."/>
            <person name="Sakaki Y."/>
            <person name="Tanaka A."/>
            <person name="Yokoyama S."/>
        </authorList>
    </citation>
    <scope>NUCLEOTIDE SEQUENCE [LARGE SCALE MRNA] (ISOFORM 1)</scope>
    <source>
        <tissue>Brain</tissue>
    </source>
</reference>
<reference key="3">
    <citation type="journal article" date="2003" name="Nature">
        <title>The DNA sequence of human chromosome 7.</title>
        <authorList>
            <person name="Hillier L.W."/>
            <person name="Fulton R.S."/>
            <person name="Fulton L.A."/>
            <person name="Graves T.A."/>
            <person name="Pepin K.H."/>
            <person name="Wagner-McPherson C."/>
            <person name="Layman D."/>
            <person name="Maas J."/>
            <person name="Jaeger S."/>
            <person name="Walker R."/>
            <person name="Wylie K."/>
            <person name="Sekhon M."/>
            <person name="Becker M.C."/>
            <person name="O'Laughlin M.D."/>
            <person name="Schaller M.E."/>
            <person name="Fewell G.A."/>
            <person name="Delehaunty K.D."/>
            <person name="Miner T.L."/>
            <person name="Nash W.E."/>
            <person name="Cordes M."/>
            <person name="Du H."/>
            <person name="Sun H."/>
            <person name="Edwards J."/>
            <person name="Bradshaw-Cordum H."/>
            <person name="Ali J."/>
            <person name="Andrews S."/>
            <person name="Isak A."/>
            <person name="Vanbrunt A."/>
            <person name="Nguyen C."/>
            <person name="Du F."/>
            <person name="Lamar B."/>
            <person name="Courtney L."/>
            <person name="Kalicki J."/>
            <person name="Ozersky P."/>
            <person name="Bielicki L."/>
            <person name="Scott K."/>
            <person name="Holmes A."/>
            <person name="Harkins R."/>
            <person name="Harris A."/>
            <person name="Strong C.M."/>
            <person name="Hou S."/>
            <person name="Tomlinson C."/>
            <person name="Dauphin-Kohlberg S."/>
            <person name="Kozlowicz-Reilly A."/>
            <person name="Leonard S."/>
            <person name="Rohlfing T."/>
            <person name="Rock S.M."/>
            <person name="Tin-Wollam A.-M."/>
            <person name="Abbott A."/>
            <person name="Minx P."/>
            <person name="Maupin R."/>
            <person name="Strowmatt C."/>
            <person name="Latreille P."/>
            <person name="Miller N."/>
            <person name="Johnson D."/>
            <person name="Murray J."/>
            <person name="Woessner J.P."/>
            <person name="Wendl M.C."/>
            <person name="Yang S.-P."/>
            <person name="Schultz B.R."/>
            <person name="Wallis J.W."/>
            <person name="Spieth J."/>
            <person name="Bieri T.A."/>
            <person name="Nelson J.O."/>
            <person name="Berkowicz N."/>
            <person name="Wohldmann P.E."/>
            <person name="Cook L.L."/>
            <person name="Hickenbotham M.T."/>
            <person name="Eldred J."/>
            <person name="Williams D."/>
            <person name="Bedell J.A."/>
            <person name="Mardis E.R."/>
            <person name="Clifton S.W."/>
            <person name="Chissoe S.L."/>
            <person name="Marra M.A."/>
            <person name="Raymond C."/>
            <person name="Haugen E."/>
            <person name="Gillett W."/>
            <person name="Zhou Y."/>
            <person name="James R."/>
            <person name="Phelps K."/>
            <person name="Iadanoto S."/>
            <person name="Bubb K."/>
            <person name="Simms E."/>
            <person name="Levy R."/>
            <person name="Clendenning J."/>
            <person name="Kaul R."/>
            <person name="Kent W.J."/>
            <person name="Furey T.S."/>
            <person name="Baertsch R.A."/>
            <person name="Brent M.R."/>
            <person name="Keibler E."/>
            <person name="Flicek P."/>
            <person name="Bork P."/>
            <person name="Suyama M."/>
            <person name="Bailey J.A."/>
            <person name="Portnoy M.E."/>
            <person name="Torrents D."/>
            <person name="Chinwalla A.T."/>
            <person name="Gish W.R."/>
            <person name="Eddy S.R."/>
            <person name="McPherson J.D."/>
            <person name="Olson M.V."/>
            <person name="Eichler E.E."/>
            <person name="Green E.D."/>
            <person name="Waterston R.H."/>
            <person name="Wilson R.K."/>
        </authorList>
    </citation>
    <scope>NUCLEOTIDE SEQUENCE [LARGE SCALE GENOMIC DNA]</scope>
</reference>
<reference key="4">
    <citation type="journal article" date="2004" name="Genome Res.">
        <title>The status, quality, and expansion of the NIH full-length cDNA project: the Mammalian Gene Collection (MGC).</title>
        <authorList>
            <consortium name="The MGC Project Team"/>
        </authorList>
    </citation>
    <scope>NUCLEOTIDE SEQUENCE [LARGE SCALE MRNA] (ISOFORM 1)</scope>
    <source>
        <tissue>Lung</tissue>
        <tissue>Placenta</tissue>
    </source>
</reference>
<reference key="5">
    <citation type="journal article" date="2007" name="J. Cell. Mol. Med.">
        <title>Expression and sub-cellular localization of human ABH family molecules.</title>
        <authorList>
            <person name="Tsujikawa K."/>
            <person name="Koike K."/>
            <person name="Kitae K."/>
            <person name="Shinkawa A."/>
            <person name="Arima H."/>
            <person name="Suzuki T."/>
            <person name="Tsuchiya M."/>
            <person name="Makino Y."/>
            <person name="Furukawa T."/>
            <person name="Konishi N."/>
            <person name="Yamamoto H."/>
        </authorList>
    </citation>
    <scope>SUBCELLULAR LOCATION</scope>
    <scope>TISSUE SPECIFICITY</scope>
</reference>
<reference key="6">
    <citation type="journal article" date="2011" name="BMC Syst. Biol.">
        <title>Initial characterization of the human central proteome.</title>
        <authorList>
            <person name="Burkard T.R."/>
            <person name="Planyavsky M."/>
            <person name="Kaupe I."/>
            <person name="Breitwieser F.P."/>
            <person name="Buerckstuemmer T."/>
            <person name="Bennett K.L."/>
            <person name="Superti-Furga G."/>
            <person name="Colinge J."/>
        </authorList>
    </citation>
    <scope>IDENTIFICATION BY MASS SPECTROMETRY [LARGE SCALE ANALYSIS]</scope>
</reference>
<reference key="7">
    <citation type="journal article" date="2011" name="Biochem. J.">
        <title>Spectroscopic and magnetic studies of wild-type and mutant forms of the Fe(II)-and 2-oxoglutarate-dependent decarboxylase ALKBH4.</title>
        <authorList>
            <person name="Bjornstad L.G."/>
            <person name="Zoppellaro G."/>
            <person name="Tomter A.B."/>
            <person name="Falnes P.O."/>
            <person name="Andersson K.K."/>
        </authorList>
    </citation>
    <scope>FUNCTION</scope>
    <scope>COFACTOR</scope>
</reference>
<reference key="8">
    <citation type="journal article" date="2012" name="Mol. Cell. Proteomics">
        <title>Comparative large-scale characterisation of plant vs. mammal proteins reveals similar and idiosyncratic N-alpha acetylation features.</title>
        <authorList>
            <person name="Bienvenut W.V."/>
            <person name="Sumpton D."/>
            <person name="Martinez A."/>
            <person name="Lilla S."/>
            <person name="Espagne C."/>
            <person name="Meinnel T."/>
            <person name="Giglione C."/>
        </authorList>
    </citation>
    <scope>ACETYLATION [LARGE SCALE ANALYSIS] AT ALA-2</scope>
    <scope>CLEAVAGE OF INITIATOR METHIONINE [LARGE SCALE ANALYSIS]</scope>
    <scope>IDENTIFICATION BY MASS SPECTROMETRY [LARGE SCALE ANALYSIS]</scope>
</reference>
<reference key="9">
    <citation type="journal article" date="2012" name="PLoS ONE">
        <title>Human ALKBH4 interacts with proteins associated with transcription.</title>
        <authorList>
            <person name="Bjornstad L.G."/>
            <person name="Meza T.J."/>
            <person name="Otterlei M."/>
            <person name="Olafsrud S.M."/>
            <person name="Meza-Zepeda L.A."/>
            <person name="Falnes P.O."/>
        </authorList>
    </citation>
    <scope>INTERACTION WITH ZFHX3; MLLT3; MLLT1; HSF4; EP300; TES; EIF3C; MTMR6 AND PSMA6</scope>
    <scope>SUBCELLULAR LOCATION</scope>
</reference>
<reference key="10">
    <citation type="journal article" date="2012" name="Proc. Natl. Acad. Sci. U.S.A.">
        <title>N-terminal acetylome analyses and functional insights of the N-terminal acetyltransferase NatB.</title>
        <authorList>
            <person name="Van Damme P."/>
            <person name="Lasa M."/>
            <person name="Polevoda B."/>
            <person name="Gazquez C."/>
            <person name="Elosegui-Artola A."/>
            <person name="Kim D.S."/>
            <person name="De Juan-Pardo E."/>
            <person name="Demeyer K."/>
            <person name="Hole K."/>
            <person name="Larrea E."/>
            <person name="Timmerman E."/>
            <person name="Prieto J."/>
            <person name="Arnesen T."/>
            <person name="Sherman F."/>
            <person name="Gevaert K."/>
            <person name="Aldabe R."/>
        </authorList>
    </citation>
    <scope>ACETYLATION [LARGE SCALE ANALYSIS] AT ALA-2</scope>
    <scope>CLEAVAGE OF INITIATOR METHIONINE [LARGE SCALE ANALYSIS]</scope>
    <scope>IDENTIFICATION BY MASS SPECTROMETRY [LARGE SCALE ANALYSIS]</scope>
</reference>
<reference key="11">
    <citation type="journal article" date="2013" name="J. Proteome Res.">
        <title>Toward a comprehensive characterization of a human cancer cell phosphoproteome.</title>
        <authorList>
            <person name="Zhou H."/>
            <person name="Di Palma S."/>
            <person name="Preisinger C."/>
            <person name="Peng M."/>
            <person name="Polat A.N."/>
            <person name="Heck A.J."/>
            <person name="Mohammed S."/>
        </authorList>
    </citation>
    <scope>PHOSPHORYLATION [LARGE SCALE ANALYSIS] AT THR-8</scope>
    <scope>IDENTIFICATION BY MASS SPECTROMETRY [LARGE SCALE ANALYSIS]</scope>
    <source>
        <tissue>Erythroleukemia</tissue>
    </source>
</reference>
<reference key="12">
    <citation type="journal article" date="2013" name="Nat. Commun.">
        <title>ALKBH4-dependent demethylation of actin regulates actomyosin dynamics.</title>
        <authorList>
            <person name="Li M.M."/>
            <person name="Nilsen A."/>
            <person name="Shi Y."/>
            <person name="Fusser M."/>
            <person name="Ding Y.H."/>
            <person name="Fu Y."/>
            <person name="Liu B."/>
            <person name="Niu Y."/>
            <person name="Wu Y.S."/>
            <person name="Huang C.M."/>
            <person name="Olofsson M."/>
            <person name="Jin K.X."/>
            <person name="Lv Y."/>
            <person name="Xu X.Z."/>
            <person name="He C."/>
            <person name="Dong M.Q."/>
            <person name="Rendtlew Danielsen J.M."/>
            <person name="Klungland A."/>
            <person name="Yang Y.G."/>
        </authorList>
    </citation>
    <scope>FUNCTION</scope>
    <scope>CATALYTIC ACTIVITY</scope>
    <scope>SUBCELLULAR LOCATION</scope>
    <scope>ACTIN-BINDING</scope>
    <scope>MUTAGENESIS OF HIS-169; ASP-171 AND HIS-254</scope>
</reference>
<accession>Q9NXW9</accession>
<accession>Q53H92</accession>
<accession>Q9H6A4</accession>
<proteinExistence type="evidence at protein level"/>
<sequence>MAAAAAETPEVLRECGCKGIRTCLICERQRGSDPPWELPPAKTYRFIYCSDTGWAVGTEESDFEGWAFPFPGVMLIEDFVTREEEAELVRLMDRDPWKLSQSGRRKQDYGPKVNFRKQKLKTEGFCGLPSFSREVVRRMGLYPGLEGFRPVEQCNLDYCPERGSAIDPHLDDAWLWGERLVSLNLLSPTVLSMCREAPGSLLLCSAPSAAPEALVDSVIAPSRSVLCQEVEVAIPLPARSLLVLTGAARHQWKHAIHRRHIEARRVCVTFRELSAEFGPGGRQQELGQELLRIALSFQGRPV</sequence>
<gene>
    <name evidence="10 13" type="primary">ALKBH4</name>
    <name evidence="9" type="synonym">ABH4</name>
</gene>
<comment type="function">
    <text evidence="1 7">Dioxygenase that mediates demethylation of actin monomethylated at 'Lys-84' (K84me1), thereby acting as a regulator of actomyosin-processes (PubMed:23673617). Demethylation of actin K84me1 is required for maintaining actomyosin dynamics supporting normal cleavage furrow ingression during cytokinesis and cell migration (PubMed:23673617). In addition to proteins, also demethylates DNA: specifically demethylates DNA methylated on the 6th position of adenine (N(6)-methyladenosine) DNA, thereby regulating Polycomb silencing (By similarity).</text>
</comment>
<comment type="catalytic activity">
    <reaction evidence="1">
        <text>an N(6)-methyl-2'-deoxyadenosine in DNA + 2-oxoglutarate + O2 = a 2'-deoxyadenosine in DNA + formaldehyde + succinate + CO2</text>
        <dbReference type="Rhea" id="RHEA:49524"/>
        <dbReference type="Rhea" id="RHEA-COMP:12418"/>
        <dbReference type="Rhea" id="RHEA-COMP:12419"/>
        <dbReference type="ChEBI" id="CHEBI:15379"/>
        <dbReference type="ChEBI" id="CHEBI:16526"/>
        <dbReference type="ChEBI" id="CHEBI:16810"/>
        <dbReference type="ChEBI" id="CHEBI:16842"/>
        <dbReference type="ChEBI" id="CHEBI:30031"/>
        <dbReference type="ChEBI" id="CHEBI:90615"/>
        <dbReference type="ChEBI" id="CHEBI:90616"/>
        <dbReference type="EC" id="1.14.11.51"/>
    </reaction>
    <physiologicalReaction direction="left-to-right" evidence="1">
        <dbReference type="Rhea" id="RHEA:49525"/>
    </physiologicalReaction>
</comment>
<comment type="catalytic activity">
    <reaction evidence="7">
        <text>N(6)-methyl-L-lysyl-[protein] + 2-oxoglutarate + O2 = L-lysyl-[protein] + formaldehyde + succinate + CO2</text>
        <dbReference type="Rhea" id="RHEA:60924"/>
        <dbReference type="Rhea" id="RHEA-COMP:9752"/>
        <dbReference type="Rhea" id="RHEA-COMP:13053"/>
        <dbReference type="ChEBI" id="CHEBI:15379"/>
        <dbReference type="ChEBI" id="CHEBI:16526"/>
        <dbReference type="ChEBI" id="CHEBI:16810"/>
        <dbReference type="ChEBI" id="CHEBI:16842"/>
        <dbReference type="ChEBI" id="CHEBI:29969"/>
        <dbReference type="ChEBI" id="CHEBI:30031"/>
        <dbReference type="ChEBI" id="CHEBI:61929"/>
    </reaction>
    <physiologicalReaction direction="left-to-right" evidence="7">
        <dbReference type="Rhea" id="RHEA:60925"/>
    </physiologicalReaction>
</comment>
<comment type="cofactor">
    <cofactor evidence="4">
        <name>Fe(2+)</name>
        <dbReference type="ChEBI" id="CHEBI:29033"/>
    </cofactor>
    <text evidence="4">Binds 1 Fe(2+) ion per subunit.</text>
</comment>
<comment type="subunit">
    <text evidence="6">Interacts with ZFHX3, MLLT3, MLLT1, HSF4, EP300, TES, EIF3C, MTMR6 and PSMA6.</text>
</comment>
<comment type="interaction">
    <interactant intactId="EBI-8637516">
        <id>Q9NXW9</id>
    </interactant>
    <interactant intactId="EBI-953896">
        <id>Q9NP55</id>
        <label>BPIFA1</label>
    </interactant>
    <organismsDiffer>false</organismsDiffer>
    <experiments>3</experiments>
</comment>
<comment type="interaction">
    <interactant intactId="EBI-8637516">
        <id>Q9NXW9</id>
    </interactant>
    <interactant intactId="EBI-740376">
        <id>Q86UW9</id>
        <label>DTX2</label>
    </interactant>
    <organismsDiffer>false</organismsDiffer>
    <experiments>11</experiments>
</comment>
<comment type="interaction">
    <interactant intactId="EBI-8637516">
        <id>Q9NXW9</id>
    </interactant>
    <interactant intactId="EBI-447295">
        <id>Q09472</id>
        <label>EP300</label>
    </interactant>
    <organismsDiffer>false</organismsDiffer>
    <experiments>4</experiments>
</comment>
<comment type="interaction">
    <interactant intactId="EBI-8637516">
        <id>Q9NXW9</id>
    </interactant>
    <interactant intactId="EBI-11978259">
        <id>Q92567-2</id>
        <label>FAM168A</label>
    </interactant>
    <organismsDiffer>false</organismsDiffer>
    <experiments>3</experiments>
</comment>
<comment type="interaction">
    <interactant intactId="EBI-8637516">
        <id>Q9NXW9</id>
    </interactant>
    <interactant intactId="EBI-739467">
        <id>Q9H8Y8</id>
        <label>GORASP2</label>
    </interactant>
    <organismsDiffer>false</organismsDiffer>
    <experiments>3</experiments>
</comment>
<comment type="interaction">
    <interactant intactId="EBI-8637516">
        <id>Q9NXW9</id>
    </interactant>
    <interactant intactId="EBI-11911016">
        <id>P80188</id>
        <label>LCN2</label>
    </interactant>
    <organismsDiffer>false</organismsDiffer>
    <experiments>3</experiments>
</comment>
<comment type="interaction">
    <interactant intactId="EBI-8637516">
        <id>Q9NXW9</id>
    </interactant>
    <interactant intactId="EBI-716132">
        <id>P42568</id>
        <label>MLLT3</label>
    </interactant>
    <organismsDiffer>false</organismsDiffer>
    <experiments>5</experiments>
</comment>
<comment type="interaction">
    <interactant intactId="EBI-8637516">
        <id>Q9NXW9</id>
    </interactant>
    <interactant intactId="EBI-740897">
        <id>Q9GZT8</id>
        <label>NIF3L1</label>
    </interactant>
    <organismsDiffer>false</organismsDiffer>
    <experiments>5</experiments>
</comment>
<comment type="interaction">
    <interactant intactId="EBI-8637516">
        <id>Q9NXW9</id>
    </interactant>
    <interactant intactId="EBI-13636688">
        <id>P15884-3</id>
        <label>TCF4</label>
    </interactant>
    <organismsDiffer>false</organismsDiffer>
    <experiments>3</experiments>
</comment>
<comment type="interaction">
    <interactant intactId="EBI-8637516">
        <id>Q9NXW9</id>
    </interactant>
    <interactant intactId="EBI-3650647">
        <id>Q9BUZ4</id>
        <label>TRAF4</label>
    </interactant>
    <organismsDiffer>false</organismsDiffer>
    <experiments>4</experiments>
</comment>
<comment type="interaction">
    <interactant intactId="EBI-8637516">
        <id>Q9NXW9</id>
    </interactant>
    <interactant intactId="EBI-10309345">
        <id>Q9NX01</id>
        <label>TXNL4B</label>
    </interactant>
    <organismsDiffer>false</organismsDiffer>
    <experiments>3</experiments>
</comment>
<comment type="subcellular location">
    <subcellularLocation>
        <location evidence="3">Cytoplasm</location>
    </subcellularLocation>
    <subcellularLocation>
        <location evidence="3 6">Nucleus</location>
    </subcellularLocation>
    <subcellularLocation>
        <location evidence="1">Nucleus</location>
        <location evidence="1">Nucleolus</location>
    </subcellularLocation>
    <subcellularLocation>
        <location evidence="7">Midbody</location>
    </subcellularLocation>
    <text evidence="7">Associates with the contractile ring and midbody.</text>
</comment>
<comment type="alternative products">
    <event type="alternative splicing"/>
    <isoform>
        <id>Q9NXW9-1</id>
        <name>1</name>
        <sequence type="displayed"/>
    </isoform>
    <isoform>
        <id>Q9NXW9-2</id>
        <name>2</name>
        <sequence type="described" ref="VSP_019128 VSP_036841"/>
    </isoform>
</comment>
<comment type="tissue specificity">
    <text evidence="3">Widely expressed, with highest expression in pancreas, ovary and spleen.</text>
</comment>
<comment type="miscellaneous">
    <text evidence="12">Actin demethylase activity has not been directly confirmed in vitro; however a number of experiments strongly suggest that ALKBH4 acts as a protein demethylase.</text>
</comment>
<comment type="miscellaneous">
    <molecule>Isoform 2</molecule>
    <text evidence="11">May be produced at very low levels due to a premature stop codon in the mRNA, leading to nonsense-mediated mRNA decay.</text>
</comment>
<comment type="similarity">
    <text evidence="11">Belongs to the alkB family.</text>
</comment>
<comment type="sequence caution" evidence="11">
    <conflict type="erroneous translation">
        <sequence resource="EMBL-CDS" id="BAB15358"/>
    </conflict>
    <text>Wrong choice of CDS.</text>
</comment>
<protein>
    <recommendedName>
        <fullName evidence="11">Alpha-ketoglutarate-dependent dioxygenase alkB homolog 4</fullName>
    </recommendedName>
    <alternativeName>
        <fullName evidence="10">Alkylated DNA repair protein alkB homolog 4</fullName>
    </alternativeName>
    <alternativeName>
        <fullName evidence="11">DNA N6-methyl adenine demethylase ALKBH4</fullName>
        <ecNumber evidence="1">1.14.11.51</ecNumber>
    </alternativeName>
    <alternativeName>
        <fullName evidence="11">Lysine-specific demethylase ALKBH4</fullName>
        <ecNumber evidence="5">1.14.11.-</ecNumber>
    </alternativeName>
</protein>
<keyword id="KW-0007">Acetylation</keyword>
<keyword id="KW-0009">Actin-binding</keyword>
<keyword id="KW-0025">Alternative splicing</keyword>
<keyword id="KW-0156">Chromatin regulator</keyword>
<keyword id="KW-0963">Cytoplasm</keyword>
<keyword id="KW-0223">Dioxygenase</keyword>
<keyword id="KW-0408">Iron</keyword>
<keyword id="KW-0479">Metal-binding</keyword>
<keyword id="KW-0539">Nucleus</keyword>
<keyword id="KW-0560">Oxidoreductase</keyword>
<keyword id="KW-0597">Phosphoprotein</keyword>
<keyword id="KW-1267">Proteomics identification</keyword>
<keyword id="KW-1185">Reference proteome</keyword>
<keyword id="KW-0804">Transcription</keyword>
<keyword id="KW-0805">Transcription regulation</keyword>
<feature type="initiator methionine" description="Removed" evidence="14 15">
    <location>
        <position position="1"/>
    </location>
</feature>
<feature type="chain" id="PRO_0000239281" description="Alpha-ketoglutarate-dependent dioxygenase alkB homolog 4">
    <location>
        <begin position="2"/>
        <end position="302"/>
    </location>
</feature>
<feature type="domain" description="Fe2OG dioxygenase" evidence="2">
    <location>
        <begin position="150"/>
        <end position="274"/>
    </location>
</feature>
<feature type="binding site" evidence="2">
    <location>
        <position position="169"/>
    </location>
    <ligand>
        <name>Fe cation</name>
        <dbReference type="ChEBI" id="CHEBI:24875"/>
    </ligand>
</feature>
<feature type="binding site" evidence="2">
    <location>
        <position position="171"/>
    </location>
    <ligand>
        <name>Fe cation</name>
        <dbReference type="ChEBI" id="CHEBI:24875"/>
    </ligand>
</feature>
<feature type="binding site" evidence="2">
    <location>
        <position position="254"/>
    </location>
    <ligand>
        <name>Fe cation</name>
        <dbReference type="ChEBI" id="CHEBI:24875"/>
    </ligand>
</feature>
<feature type="binding site" evidence="2">
    <location>
        <position position="265"/>
    </location>
    <ligand>
        <name>2-oxoglutarate</name>
        <dbReference type="ChEBI" id="CHEBI:16810"/>
    </ligand>
</feature>
<feature type="modified residue" description="N-acetylalanine" evidence="14 15">
    <location>
        <position position="2"/>
    </location>
</feature>
<feature type="modified residue" description="Phosphothreonine" evidence="16">
    <location>
        <position position="8"/>
    </location>
</feature>
<feature type="splice variant" id="VSP_019128" description="In isoform 2." evidence="8">
    <original>K</original>
    <variation>E</variation>
    <location>
        <position position="42"/>
    </location>
</feature>
<feature type="splice variant" id="VSP_036841" description="In isoform 2." evidence="8">
    <location>
        <begin position="43"/>
        <end position="302"/>
    </location>
</feature>
<feature type="sequence variant" id="VAR_061004" description="In dbSNP:rs41275227.">
    <original>A</original>
    <variation>V</variation>
    <location>
        <position position="247"/>
    </location>
</feature>
<feature type="mutagenesis site" description="Loss of function mutant that acts as a dominant-negative mutant when overexpressed, leading to multinucleation and cleavage furrow disorganization; when associated with A-171 and A-254." evidence="7">
    <original>H</original>
    <variation>A</variation>
    <location>
        <position position="169"/>
    </location>
</feature>
<feature type="mutagenesis site" description="Loss of function mutant that acts as a dominant-negative mutant when overexpressed, leading to multinucleation and cleavage furrow disorganization; when associated with A-169 and A-254." evidence="7">
    <original>D</original>
    <variation>A</variation>
    <location>
        <position position="171"/>
    </location>
</feature>
<feature type="mutagenesis site" description="Loss of function mutant that acts as a dominant-negative mutant when overexpressed, leading to multinucleation and cleavage furrow disorganization; when associated with A-169 and A-171." evidence="7">
    <original>H</original>
    <variation>A</variation>
    <location>
        <position position="254"/>
    </location>
</feature>
<feature type="sequence conflict" description="In Ref. 2; BAD96409." evidence="11" ref="2">
    <original>A</original>
    <variation>V</variation>
    <location>
        <position position="210"/>
    </location>
</feature>
<dbReference type="EC" id="1.14.11.51" evidence="1"/>
<dbReference type="EC" id="1.14.11.-" evidence="5"/>
<dbReference type="EMBL" id="AK000020">
    <property type="protein sequence ID" value="BAA90888.1"/>
    <property type="molecule type" value="mRNA"/>
</dbReference>
<dbReference type="EMBL" id="AK026097">
    <property type="protein sequence ID" value="BAB15358.1"/>
    <property type="status" value="ALT_SEQ"/>
    <property type="molecule type" value="mRNA"/>
</dbReference>
<dbReference type="EMBL" id="AK222689">
    <property type="protein sequence ID" value="BAD96409.1"/>
    <property type="molecule type" value="mRNA"/>
</dbReference>
<dbReference type="EMBL" id="AC093668">
    <property type="status" value="NOT_ANNOTATED_CDS"/>
    <property type="molecule type" value="Genomic_DNA"/>
</dbReference>
<dbReference type="EMBL" id="BC002820">
    <property type="protein sequence ID" value="AAH02820.1"/>
    <property type="molecule type" value="mRNA"/>
</dbReference>
<dbReference type="EMBL" id="BC017096">
    <property type="protein sequence ID" value="AAH17096.1"/>
    <property type="molecule type" value="mRNA"/>
</dbReference>
<dbReference type="CCDS" id="CCDS5723.1">
    <molecule id="Q9NXW9-1"/>
</dbReference>
<dbReference type="RefSeq" id="NP_060091.1">
    <molecule id="Q9NXW9-1"/>
    <property type="nucleotide sequence ID" value="NM_017621.4"/>
</dbReference>
<dbReference type="RefSeq" id="XP_005250521.1">
    <property type="nucleotide sequence ID" value="XM_005250464.2"/>
</dbReference>
<dbReference type="SMR" id="Q9NXW9"/>
<dbReference type="BioGRID" id="120148">
    <property type="interactions" value="33"/>
</dbReference>
<dbReference type="FunCoup" id="Q9NXW9">
    <property type="interactions" value="306"/>
</dbReference>
<dbReference type="IntAct" id="Q9NXW9">
    <property type="interactions" value="26"/>
</dbReference>
<dbReference type="MINT" id="Q9NXW9"/>
<dbReference type="STRING" id="9606.ENSP00000292566"/>
<dbReference type="iPTMnet" id="Q9NXW9"/>
<dbReference type="PhosphoSitePlus" id="Q9NXW9"/>
<dbReference type="BioMuta" id="ALKBH4"/>
<dbReference type="DMDM" id="74734701"/>
<dbReference type="jPOST" id="Q9NXW9"/>
<dbReference type="MassIVE" id="Q9NXW9"/>
<dbReference type="PaxDb" id="9606-ENSP00000292566"/>
<dbReference type="PeptideAtlas" id="Q9NXW9"/>
<dbReference type="ProteomicsDB" id="83141">
    <molecule id="Q9NXW9-1"/>
</dbReference>
<dbReference type="ProteomicsDB" id="83142">
    <molecule id="Q9NXW9-2"/>
</dbReference>
<dbReference type="Pumba" id="Q9NXW9"/>
<dbReference type="Antibodypedia" id="45707">
    <property type="antibodies" value="150 antibodies from 22 providers"/>
</dbReference>
<dbReference type="DNASU" id="54784"/>
<dbReference type="Ensembl" id="ENST00000292566.4">
    <molecule id="Q9NXW9-1"/>
    <property type="protein sequence ID" value="ENSP00000292566.3"/>
    <property type="gene ID" value="ENSG00000160993.4"/>
</dbReference>
<dbReference type="Ensembl" id="ENST00000490528.1">
    <molecule id="Q9NXW9-2"/>
    <property type="protein sequence ID" value="ENSP00000420362.1"/>
    <property type="gene ID" value="ENSG00000160993.4"/>
</dbReference>
<dbReference type="GeneID" id="54784"/>
<dbReference type="KEGG" id="hsa:54784"/>
<dbReference type="MANE-Select" id="ENST00000292566.4">
    <property type="protein sequence ID" value="ENSP00000292566.3"/>
    <property type="RefSeq nucleotide sequence ID" value="NM_017621.4"/>
    <property type="RefSeq protein sequence ID" value="NP_060091.1"/>
</dbReference>
<dbReference type="UCSC" id="uc003uzl.4">
    <molecule id="Q9NXW9-1"/>
    <property type="organism name" value="human"/>
</dbReference>
<dbReference type="AGR" id="HGNC:21900"/>
<dbReference type="CTD" id="54784"/>
<dbReference type="DisGeNET" id="54784"/>
<dbReference type="GeneCards" id="ALKBH4"/>
<dbReference type="HGNC" id="HGNC:21900">
    <property type="gene designation" value="ALKBH4"/>
</dbReference>
<dbReference type="HPA" id="ENSG00000160993">
    <property type="expression patterns" value="Low tissue specificity"/>
</dbReference>
<dbReference type="MIM" id="613302">
    <property type="type" value="gene"/>
</dbReference>
<dbReference type="neXtProt" id="NX_Q9NXW9"/>
<dbReference type="OpenTargets" id="ENSG00000160993"/>
<dbReference type="PharmGKB" id="PA143485294"/>
<dbReference type="VEuPathDB" id="HostDB:ENSG00000160993"/>
<dbReference type="eggNOG" id="KOG3959">
    <property type="taxonomic scope" value="Eukaryota"/>
</dbReference>
<dbReference type="GeneTree" id="ENSGT00390000006344"/>
<dbReference type="HOGENOM" id="CLU_060545_0_0_1"/>
<dbReference type="InParanoid" id="Q9NXW9"/>
<dbReference type="OMA" id="MNTLRPC"/>
<dbReference type="OrthoDB" id="442860at2759"/>
<dbReference type="PAN-GO" id="Q9NXW9">
    <property type="GO annotations" value="8 GO annotations based on evolutionary models"/>
</dbReference>
<dbReference type="PhylomeDB" id="Q9NXW9"/>
<dbReference type="TreeFam" id="TF314885"/>
<dbReference type="PathwayCommons" id="Q9NXW9"/>
<dbReference type="SignaLink" id="Q9NXW9"/>
<dbReference type="BioGRID-ORCS" id="54784">
    <property type="hits" value="18 hits in 1160 CRISPR screens"/>
</dbReference>
<dbReference type="GenomeRNAi" id="54784"/>
<dbReference type="Pharos" id="Q9NXW9">
    <property type="development level" value="Tbio"/>
</dbReference>
<dbReference type="PRO" id="PR:Q9NXW9"/>
<dbReference type="Proteomes" id="UP000005640">
    <property type="component" value="Chromosome 7"/>
</dbReference>
<dbReference type="RNAct" id="Q9NXW9">
    <property type="molecule type" value="protein"/>
</dbReference>
<dbReference type="Bgee" id="ENSG00000160993">
    <property type="expression patterns" value="Expressed in parotid gland and 177 other cell types or tissues"/>
</dbReference>
<dbReference type="GO" id="GO:0070938">
    <property type="term" value="C:contractile ring"/>
    <property type="evidence" value="ECO:0000314"/>
    <property type="project" value="UniProtKB"/>
</dbReference>
<dbReference type="GO" id="GO:0005737">
    <property type="term" value="C:cytoplasm"/>
    <property type="evidence" value="ECO:0007669"/>
    <property type="project" value="UniProtKB-SubCell"/>
</dbReference>
<dbReference type="GO" id="GO:0030496">
    <property type="term" value="C:midbody"/>
    <property type="evidence" value="ECO:0000314"/>
    <property type="project" value="UniProtKB"/>
</dbReference>
<dbReference type="GO" id="GO:0005730">
    <property type="term" value="C:nucleolus"/>
    <property type="evidence" value="ECO:0007669"/>
    <property type="project" value="UniProtKB-SubCell"/>
</dbReference>
<dbReference type="GO" id="GO:0016706">
    <property type="term" value="F:2-oxoglutarate-dependent dioxygenase activity"/>
    <property type="evidence" value="ECO:0000314"/>
    <property type="project" value="UniProtKB"/>
</dbReference>
<dbReference type="GO" id="GO:0003779">
    <property type="term" value="F:actin binding"/>
    <property type="evidence" value="ECO:0000314"/>
    <property type="project" value="UniProtKB"/>
</dbReference>
<dbReference type="GO" id="GO:0035516">
    <property type="term" value="F:broad specificity oxidative DNA demethylase activity"/>
    <property type="evidence" value="ECO:0000250"/>
    <property type="project" value="UniProtKB"/>
</dbReference>
<dbReference type="GO" id="GO:0032451">
    <property type="term" value="F:demethylase activity"/>
    <property type="evidence" value="ECO:0000318"/>
    <property type="project" value="GO_Central"/>
</dbReference>
<dbReference type="GO" id="GO:0141131">
    <property type="term" value="F:DNA N6-methyladenine demethylase activity"/>
    <property type="evidence" value="ECO:0007669"/>
    <property type="project" value="UniProtKB-EC"/>
</dbReference>
<dbReference type="GO" id="GO:0046872">
    <property type="term" value="F:metal ion binding"/>
    <property type="evidence" value="ECO:0007669"/>
    <property type="project" value="UniProtKB-KW"/>
</dbReference>
<dbReference type="GO" id="GO:0140457">
    <property type="term" value="F:protein demethylase activity"/>
    <property type="evidence" value="ECO:0000304"/>
    <property type="project" value="UniProtKB"/>
</dbReference>
<dbReference type="GO" id="GO:0031032">
    <property type="term" value="P:actomyosin structure organization"/>
    <property type="evidence" value="ECO:0000315"/>
    <property type="project" value="UniProtKB"/>
</dbReference>
<dbReference type="GO" id="GO:0036090">
    <property type="term" value="P:cleavage furrow ingression"/>
    <property type="evidence" value="ECO:0000315"/>
    <property type="project" value="UniProtKB"/>
</dbReference>
<dbReference type="GO" id="GO:0070988">
    <property type="term" value="P:demethylation"/>
    <property type="evidence" value="ECO:0007669"/>
    <property type="project" value="InterPro"/>
</dbReference>
<dbReference type="GO" id="GO:0141137">
    <property type="term" value="P:positive regulation of gene expression, epigenetic"/>
    <property type="evidence" value="ECO:0000250"/>
    <property type="project" value="UniProtKB"/>
</dbReference>
<dbReference type="Gene3D" id="2.60.120.590">
    <property type="entry name" value="Alpha-ketoglutarate-dependent dioxygenase AlkB-like"/>
    <property type="match status" value="1"/>
</dbReference>
<dbReference type="InterPro" id="IPR037151">
    <property type="entry name" value="AlkB-like_sf"/>
</dbReference>
<dbReference type="InterPro" id="IPR032857">
    <property type="entry name" value="ALKBH4"/>
</dbReference>
<dbReference type="PANTHER" id="PTHR12463:SF0">
    <property type="entry name" value="ALPHA-KETOGLUTARATE-DEPENDENT DIOXYGENASE ALKB HOMOLOG 4"/>
    <property type="match status" value="1"/>
</dbReference>
<dbReference type="PANTHER" id="PTHR12463">
    <property type="entry name" value="OXYGENASE-RELATED"/>
    <property type="match status" value="1"/>
</dbReference>
<dbReference type="SUPFAM" id="SSF51197">
    <property type="entry name" value="Clavaminate synthase-like"/>
    <property type="match status" value="1"/>
</dbReference>
<organism>
    <name type="scientific">Homo sapiens</name>
    <name type="common">Human</name>
    <dbReference type="NCBI Taxonomy" id="9606"/>
    <lineage>
        <taxon>Eukaryota</taxon>
        <taxon>Metazoa</taxon>
        <taxon>Chordata</taxon>
        <taxon>Craniata</taxon>
        <taxon>Vertebrata</taxon>
        <taxon>Euteleostomi</taxon>
        <taxon>Mammalia</taxon>
        <taxon>Eutheria</taxon>
        <taxon>Euarchontoglires</taxon>
        <taxon>Primates</taxon>
        <taxon>Haplorrhini</taxon>
        <taxon>Catarrhini</taxon>
        <taxon>Hominidae</taxon>
        <taxon>Homo</taxon>
    </lineage>
</organism>